<protein>
    <recommendedName>
        <fullName evidence="1">Ketol-acid reductoisomerase (NADP(+))</fullName>
        <shortName evidence="1">KARI</shortName>
        <ecNumber evidence="1">1.1.1.86</ecNumber>
    </recommendedName>
    <alternativeName>
        <fullName evidence="1">Acetohydroxy-acid isomeroreductase</fullName>
        <shortName evidence="1">AHIR</shortName>
    </alternativeName>
    <alternativeName>
        <fullName evidence="1">Alpha-keto-beta-hydroxylacyl reductoisomerase</fullName>
    </alternativeName>
    <alternativeName>
        <fullName evidence="1">Ketol-acid reductoisomerase type 1</fullName>
    </alternativeName>
    <alternativeName>
        <fullName evidence="1">Ketol-acid reductoisomerase type I</fullName>
    </alternativeName>
</protein>
<reference key="1">
    <citation type="journal article" date="1995" name="Gene">
        <title>Cloning, sequencing and expression of the ilvBNC gene cluster from Streptomyces avermitilis.</title>
        <authorList>
            <person name="de Rossi E."/>
            <person name="Leva R."/>
            <person name="Gusberti L."/>
            <person name="Manachini P.L."/>
            <person name="Riccardi G."/>
        </authorList>
    </citation>
    <scope>NUCLEOTIDE SEQUENCE [GENOMIC DNA]</scope>
    <source>
        <strain>CU-18</strain>
    </source>
</reference>
<reference key="2">
    <citation type="journal article" date="2001" name="Proc. Natl. Acad. Sci. U.S.A.">
        <title>Genome sequence of an industrial microorganism Streptomyces avermitilis: deducing the ability of producing secondary metabolites.</title>
        <authorList>
            <person name="Omura S."/>
            <person name="Ikeda H."/>
            <person name="Ishikawa J."/>
            <person name="Hanamoto A."/>
            <person name="Takahashi C."/>
            <person name="Shinose M."/>
            <person name="Takahashi Y."/>
            <person name="Horikawa H."/>
            <person name="Nakazawa H."/>
            <person name="Osonoe T."/>
            <person name="Kikuchi H."/>
            <person name="Shiba T."/>
            <person name="Sakaki Y."/>
            <person name="Hattori M."/>
        </authorList>
    </citation>
    <scope>NUCLEOTIDE SEQUENCE [LARGE SCALE GENOMIC DNA]</scope>
    <source>
        <strain>ATCC 31267 / DSM 46492 / JCM 5070 / NBRC 14893 / NCIMB 12804 / NRRL 8165 / MA-4680</strain>
    </source>
</reference>
<reference key="3">
    <citation type="journal article" date="2003" name="Nat. Biotechnol.">
        <title>Complete genome sequence and comparative analysis of the industrial microorganism Streptomyces avermitilis.</title>
        <authorList>
            <person name="Ikeda H."/>
            <person name="Ishikawa J."/>
            <person name="Hanamoto A."/>
            <person name="Shinose M."/>
            <person name="Kikuchi H."/>
            <person name="Shiba T."/>
            <person name="Sakaki Y."/>
            <person name="Hattori M."/>
            <person name="Omura S."/>
        </authorList>
    </citation>
    <scope>NUCLEOTIDE SEQUENCE [LARGE SCALE GENOMIC DNA]</scope>
    <source>
        <strain>ATCC 31267 / DSM 46492 / JCM 5070 / NBRC 14893 / NCIMB 12804 / NRRL 8165 / MA-4680</strain>
    </source>
</reference>
<sequence length="333" mass="36285">MAELFYDADADLSIIQGRKVAVIGYGSQGHAHALSLRDSGVDVRVGLHEGSKSKAKAEEQGLRVVTPSEAAAEADVIMILVPDPIQAQVYEESIKDNLKDGDALFFGHGLNIRFGFIKPPAGVDVCMVAPKGPGHLVRRQYEEGRGVPCIAAVEQDATGNGFALALSYAKGIGGTRAGVIKTTFTEETETDLFGEQAVLCGGTAALVKAGFETLTEAGYQPEIAYFECLHELKLIVDLMYEGGLEKMRWSISETAEWGDYVTGPRIITDATKAEMKKVLAEIQDGTFAQAWMDEYHGGLKKYNEYKTQDENHLLETTGKELRKLMSWVNDEEA</sequence>
<accession>Q59818</accession>
<evidence type="ECO:0000255" key="1">
    <source>
        <dbReference type="HAMAP-Rule" id="MF_00435"/>
    </source>
</evidence>
<evidence type="ECO:0000255" key="2">
    <source>
        <dbReference type="PROSITE-ProRule" id="PRU01197"/>
    </source>
</evidence>
<evidence type="ECO:0000255" key="3">
    <source>
        <dbReference type="PROSITE-ProRule" id="PRU01198"/>
    </source>
</evidence>
<evidence type="ECO:0000305" key="4"/>
<proteinExistence type="inferred from homology"/>
<dbReference type="EC" id="1.1.1.86" evidence="1"/>
<dbReference type="EMBL" id="L39268">
    <property type="protein sequence ID" value="AAA93100.1"/>
    <property type="molecule type" value="Genomic_DNA"/>
</dbReference>
<dbReference type="EMBL" id="BA000030">
    <property type="protein sequence ID" value="BAC70442.1"/>
    <property type="molecule type" value="Genomic_DNA"/>
</dbReference>
<dbReference type="RefSeq" id="WP_010984163.1">
    <property type="nucleotide sequence ID" value="NZ_JZJK01000071.1"/>
</dbReference>
<dbReference type="SMR" id="Q59818"/>
<dbReference type="GeneID" id="41539819"/>
<dbReference type="KEGG" id="sma:SAVERM_2731"/>
<dbReference type="eggNOG" id="COG0059">
    <property type="taxonomic scope" value="Bacteria"/>
</dbReference>
<dbReference type="HOGENOM" id="CLU_033821_0_1_11"/>
<dbReference type="OrthoDB" id="9804088at2"/>
<dbReference type="BRENDA" id="1.1.1.86">
    <property type="organism ID" value="5980"/>
</dbReference>
<dbReference type="UniPathway" id="UPA00047">
    <property type="reaction ID" value="UER00056"/>
</dbReference>
<dbReference type="UniPathway" id="UPA00049">
    <property type="reaction ID" value="UER00060"/>
</dbReference>
<dbReference type="Proteomes" id="UP000000428">
    <property type="component" value="Chromosome"/>
</dbReference>
<dbReference type="GO" id="GO:0005829">
    <property type="term" value="C:cytosol"/>
    <property type="evidence" value="ECO:0007669"/>
    <property type="project" value="TreeGrafter"/>
</dbReference>
<dbReference type="GO" id="GO:0004455">
    <property type="term" value="F:ketol-acid reductoisomerase activity"/>
    <property type="evidence" value="ECO:0007669"/>
    <property type="project" value="UniProtKB-UniRule"/>
</dbReference>
<dbReference type="GO" id="GO:0000287">
    <property type="term" value="F:magnesium ion binding"/>
    <property type="evidence" value="ECO:0007669"/>
    <property type="project" value="UniProtKB-UniRule"/>
</dbReference>
<dbReference type="GO" id="GO:0050661">
    <property type="term" value="F:NADP binding"/>
    <property type="evidence" value="ECO:0007669"/>
    <property type="project" value="InterPro"/>
</dbReference>
<dbReference type="GO" id="GO:0009097">
    <property type="term" value="P:isoleucine biosynthetic process"/>
    <property type="evidence" value="ECO:0007669"/>
    <property type="project" value="UniProtKB-UniRule"/>
</dbReference>
<dbReference type="GO" id="GO:0009099">
    <property type="term" value="P:L-valine biosynthetic process"/>
    <property type="evidence" value="ECO:0007669"/>
    <property type="project" value="UniProtKB-UniRule"/>
</dbReference>
<dbReference type="FunFam" id="3.40.50.720:FF:000023">
    <property type="entry name" value="Ketol-acid reductoisomerase (NADP(+))"/>
    <property type="match status" value="1"/>
</dbReference>
<dbReference type="Gene3D" id="6.10.240.10">
    <property type="match status" value="1"/>
</dbReference>
<dbReference type="Gene3D" id="3.40.50.720">
    <property type="entry name" value="NAD(P)-binding Rossmann-like Domain"/>
    <property type="match status" value="1"/>
</dbReference>
<dbReference type="HAMAP" id="MF_00435">
    <property type="entry name" value="IlvC"/>
    <property type="match status" value="1"/>
</dbReference>
<dbReference type="InterPro" id="IPR008927">
    <property type="entry name" value="6-PGluconate_DH-like_C_sf"/>
</dbReference>
<dbReference type="InterPro" id="IPR013023">
    <property type="entry name" value="KARI"/>
</dbReference>
<dbReference type="InterPro" id="IPR000506">
    <property type="entry name" value="KARI_C"/>
</dbReference>
<dbReference type="InterPro" id="IPR013116">
    <property type="entry name" value="KARI_N"/>
</dbReference>
<dbReference type="InterPro" id="IPR014359">
    <property type="entry name" value="KARI_prok"/>
</dbReference>
<dbReference type="InterPro" id="IPR036291">
    <property type="entry name" value="NAD(P)-bd_dom_sf"/>
</dbReference>
<dbReference type="NCBIfam" id="TIGR00465">
    <property type="entry name" value="ilvC"/>
    <property type="match status" value="1"/>
</dbReference>
<dbReference type="NCBIfam" id="NF004017">
    <property type="entry name" value="PRK05479.1"/>
    <property type="match status" value="1"/>
</dbReference>
<dbReference type="NCBIfam" id="NF009940">
    <property type="entry name" value="PRK13403.1"/>
    <property type="match status" value="1"/>
</dbReference>
<dbReference type="PANTHER" id="PTHR21371">
    <property type="entry name" value="KETOL-ACID REDUCTOISOMERASE, MITOCHONDRIAL"/>
    <property type="match status" value="1"/>
</dbReference>
<dbReference type="PANTHER" id="PTHR21371:SF1">
    <property type="entry name" value="KETOL-ACID REDUCTOISOMERASE, MITOCHONDRIAL"/>
    <property type="match status" value="1"/>
</dbReference>
<dbReference type="Pfam" id="PF01450">
    <property type="entry name" value="KARI_C"/>
    <property type="match status" value="1"/>
</dbReference>
<dbReference type="Pfam" id="PF07991">
    <property type="entry name" value="KARI_N"/>
    <property type="match status" value="1"/>
</dbReference>
<dbReference type="PIRSF" id="PIRSF000116">
    <property type="entry name" value="IlvC_gammaproteo"/>
    <property type="match status" value="1"/>
</dbReference>
<dbReference type="SUPFAM" id="SSF48179">
    <property type="entry name" value="6-phosphogluconate dehydrogenase C-terminal domain-like"/>
    <property type="match status" value="1"/>
</dbReference>
<dbReference type="SUPFAM" id="SSF51735">
    <property type="entry name" value="NAD(P)-binding Rossmann-fold domains"/>
    <property type="match status" value="1"/>
</dbReference>
<dbReference type="PROSITE" id="PS51851">
    <property type="entry name" value="KARI_C"/>
    <property type="match status" value="1"/>
</dbReference>
<dbReference type="PROSITE" id="PS51850">
    <property type="entry name" value="KARI_N"/>
    <property type="match status" value="1"/>
</dbReference>
<comment type="function">
    <text evidence="1">Involved in the biosynthesis of branched-chain amino acids (BCAA). Catalyzes an alkyl-migration followed by a ketol-acid reduction of (S)-2-acetolactate (S2AL) to yield (R)-2,3-dihydroxy-isovalerate. In the isomerase reaction, S2AL is rearranged via a Mg-dependent methyl migration to produce 3-hydroxy-3-methyl-2-ketobutyrate (HMKB). In the reductase reaction, this 2-ketoacid undergoes a metal-dependent reduction by NADPH to yield (R)-2,3-dihydroxy-isovalerate.</text>
</comment>
<comment type="catalytic activity">
    <reaction evidence="1">
        <text>(2R)-2,3-dihydroxy-3-methylbutanoate + NADP(+) = (2S)-2-acetolactate + NADPH + H(+)</text>
        <dbReference type="Rhea" id="RHEA:22068"/>
        <dbReference type="ChEBI" id="CHEBI:15378"/>
        <dbReference type="ChEBI" id="CHEBI:49072"/>
        <dbReference type="ChEBI" id="CHEBI:57783"/>
        <dbReference type="ChEBI" id="CHEBI:58349"/>
        <dbReference type="ChEBI" id="CHEBI:58476"/>
        <dbReference type="EC" id="1.1.1.86"/>
    </reaction>
</comment>
<comment type="catalytic activity">
    <reaction evidence="1">
        <text>(2R,3R)-2,3-dihydroxy-3-methylpentanoate + NADP(+) = (S)-2-ethyl-2-hydroxy-3-oxobutanoate + NADPH + H(+)</text>
        <dbReference type="Rhea" id="RHEA:13493"/>
        <dbReference type="ChEBI" id="CHEBI:15378"/>
        <dbReference type="ChEBI" id="CHEBI:49256"/>
        <dbReference type="ChEBI" id="CHEBI:49258"/>
        <dbReference type="ChEBI" id="CHEBI:57783"/>
        <dbReference type="ChEBI" id="CHEBI:58349"/>
        <dbReference type="EC" id="1.1.1.86"/>
    </reaction>
</comment>
<comment type="cofactor">
    <cofactor evidence="1">
        <name>Mg(2+)</name>
        <dbReference type="ChEBI" id="CHEBI:18420"/>
    </cofactor>
    <text evidence="1">Binds 2 magnesium ions per subunit.</text>
</comment>
<comment type="pathway">
    <text evidence="1">Amino-acid biosynthesis; L-isoleucine biosynthesis; L-isoleucine from 2-oxobutanoate: step 2/4.</text>
</comment>
<comment type="pathway">
    <text evidence="1">Amino-acid biosynthesis; L-valine biosynthesis; L-valine from pyruvate: step 2/4.</text>
</comment>
<comment type="similarity">
    <text evidence="1">Belongs to the ketol-acid reductoisomerase family.</text>
</comment>
<feature type="chain" id="PRO_0000151365" description="Ketol-acid reductoisomerase (NADP(+))">
    <location>
        <begin position="1"/>
        <end position="333"/>
    </location>
</feature>
<feature type="domain" description="KARI N-terminal Rossmann" evidence="2">
    <location>
        <begin position="2"/>
        <end position="182"/>
    </location>
</feature>
<feature type="domain" description="KARI C-terminal knotted" evidence="3">
    <location>
        <begin position="183"/>
        <end position="328"/>
    </location>
</feature>
<feature type="active site" evidence="1">
    <location>
        <position position="108"/>
    </location>
</feature>
<feature type="binding site" evidence="1">
    <location>
        <begin position="25"/>
        <end position="28"/>
    </location>
    <ligand>
        <name>NADP(+)</name>
        <dbReference type="ChEBI" id="CHEBI:58349"/>
    </ligand>
</feature>
<feature type="binding site" evidence="1">
    <location>
        <position position="51"/>
    </location>
    <ligand>
        <name>NADP(+)</name>
        <dbReference type="ChEBI" id="CHEBI:58349"/>
    </ligand>
</feature>
<feature type="binding site" evidence="1">
    <location>
        <position position="53"/>
    </location>
    <ligand>
        <name>NADP(+)</name>
        <dbReference type="ChEBI" id="CHEBI:58349"/>
    </ligand>
</feature>
<feature type="binding site" evidence="1">
    <location>
        <begin position="83"/>
        <end position="86"/>
    </location>
    <ligand>
        <name>NADP(+)</name>
        <dbReference type="ChEBI" id="CHEBI:58349"/>
    </ligand>
</feature>
<feature type="binding site" evidence="1">
    <location>
        <position position="134"/>
    </location>
    <ligand>
        <name>NADP(+)</name>
        <dbReference type="ChEBI" id="CHEBI:58349"/>
    </ligand>
</feature>
<feature type="binding site" evidence="1">
    <location>
        <position position="191"/>
    </location>
    <ligand>
        <name>Mg(2+)</name>
        <dbReference type="ChEBI" id="CHEBI:18420"/>
        <label>1</label>
    </ligand>
</feature>
<feature type="binding site" evidence="1">
    <location>
        <position position="191"/>
    </location>
    <ligand>
        <name>Mg(2+)</name>
        <dbReference type="ChEBI" id="CHEBI:18420"/>
        <label>2</label>
    </ligand>
</feature>
<feature type="binding site" evidence="1">
    <location>
        <position position="195"/>
    </location>
    <ligand>
        <name>Mg(2+)</name>
        <dbReference type="ChEBI" id="CHEBI:18420"/>
        <label>1</label>
    </ligand>
</feature>
<feature type="binding site" evidence="1">
    <location>
        <position position="227"/>
    </location>
    <ligand>
        <name>Mg(2+)</name>
        <dbReference type="ChEBI" id="CHEBI:18420"/>
        <label>2</label>
    </ligand>
</feature>
<feature type="binding site" evidence="1">
    <location>
        <position position="231"/>
    </location>
    <ligand>
        <name>Mg(2+)</name>
        <dbReference type="ChEBI" id="CHEBI:18420"/>
        <label>2</label>
    </ligand>
</feature>
<feature type="binding site" evidence="1">
    <location>
        <position position="252"/>
    </location>
    <ligand>
        <name>substrate</name>
    </ligand>
</feature>
<feature type="sequence conflict" description="In Ref. 1; AAA93100." evidence="4" ref="1">
    <original>T</original>
    <variation>S</variation>
    <location>
        <position position="213"/>
    </location>
</feature>
<feature type="sequence conflict" description="In Ref. 1; AAA93100." evidence="4" ref="1">
    <original>KL</original>
    <variation>NV</variation>
    <location>
        <begin position="323"/>
        <end position="324"/>
    </location>
</feature>
<organism>
    <name type="scientific">Streptomyces avermitilis (strain ATCC 31267 / DSM 46492 / JCM 5070 / NBRC 14893 / NCIMB 12804 / NRRL 8165 / MA-4680)</name>
    <dbReference type="NCBI Taxonomy" id="227882"/>
    <lineage>
        <taxon>Bacteria</taxon>
        <taxon>Bacillati</taxon>
        <taxon>Actinomycetota</taxon>
        <taxon>Actinomycetes</taxon>
        <taxon>Kitasatosporales</taxon>
        <taxon>Streptomycetaceae</taxon>
        <taxon>Streptomyces</taxon>
    </lineage>
</organism>
<keyword id="KW-0028">Amino-acid biosynthesis</keyword>
<keyword id="KW-0100">Branched-chain amino acid biosynthesis</keyword>
<keyword id="KW-0460">Magnesium</keyword>
<keyword id="KW-0479">Metal-binding</keyword>
<keyword id="KW-0521">NADP</keyword>
<keyword id="KW-0560">Oxidoreductase</keyword>
<keyword id="KW-1185">Reference proteome</keyword>
<name>ILVC_STRAW</name>
<gene>
    <name evidence="1" type="primary">ilvC</name>
    <name type="ordered locus">SAV_2731</name>
</gene>